<gene>
    <name evidence="1" type="primary">surA</name>
    <name type="ordered locus">BAV0695</name>
</gene>
<feature type="signal peptide" evidence="1">
    <location>
        <begin position="1"/>
        <end position="29"/>
    </location>
</feature>
<feature type="chain" id="PRO_5000077348" description="Chaperone SurA">
    <location>
        <begin position="30"/>
        <end position="506"/>
    </location>
</feature>
<feature type="domain" description="PpiC 1" evidence="1">
    <location>
        <begin position="219"/>
        <end position="320"/>
    </location>
</feature>
<feature type="domain" description="PpiC 2" evidence="1">
    <location>
        <begin position="351"/>
        <end position="450"/>
    </location>
</feature>
<organism>
    <name type="scientific">Bordetella avium (strain 197N)</name>
    <dbReference type="NCBI Taxonomy" id="360910"/>
    <lineage>
        <taxon>Bacteria</taxon>
        <taxon>Pseudomonadati</taxon>
        <taxon>Pseudomonadota</taxon>
        <taxon>Betaproteobacteria</taxon>
        <taxon>Burkholderiales</taxon>
        <taxon>Alcaligenaceae</taxon>
        <taxon>Bordetella</taxon>
    </lineage>
</organism>
<reference key="1">
    <citation type="journal article" date="2006" name="J. Bacteriol.">
        <title>Comparison of the genome sequence of the poultry pathogen Bordetella avium with those of B. bronchiseptica, B. pertussis, and B. parapertussis reveals extensive diversity in surface structures associated with host interaction.</title>
        <authorList>
            <person name="Sebaihia M."/>
            <person name="Preston A."/>
            <person name="Maskell D.J."/>
            <person name="Kuzmiak H."/>
            <person name="Connell T.D."/>
            <person name="King N.D."/>
            <person name="Orndorff P.E."/>
            <person name="Miyamoto D.M."/>
            <person name="Thomson N.R."/>
            <person name="Harris D."/>
            <person name="Goble A."/>
            <person name="Lord A."/>
            <person name="Murphy L."/>
            <person name="Quail M.A."/>
            <person name="Rutter S."/>
            <person name="Squares R."/>
            <person name="Squares S."/>
            <person name="Woodward J."/>
            <person name="Parkhill J."/>
            <person name="Temple L.M."/>
        </authorList>
    </citation>
    <scope>NUCLEOTIDE SEQUENCE [LARGE SCALE GENOMIC DNA]</scope>
    <source>
        <strain>197N</strain>
    </source>
</reference>
<protein>
    <recommendedName>
        <fullName evidence="1">Chaperone SurA</fullName>
    </recommendedName>
    <alternativeName>
        <fullName evidence="1">Peptidyl-prolyl cis-trans isomerase SurA</fullName>
        <shortName evidence="1">PPIase SurA</shortName>
        <ecNumber evidence="1">5.2.1.8</ecNumber>
    </alternativeName>
    <alternativeName>
        <fullName evidence="1">Rotamase SurA</fullName>
    </alternativeName>
</protein>
<comment type="function">
    <text evidence="1">Chaperone involved in the correct folding and assembly of outer membrane proteins. Recognizes specific patterns of aromatic residues and the orientation of their side chains, which are found more frequently in integral outer membrane proteins. May act in both early periplasmic and late outer membrane-associated steps of protein maturation.</text>
</comment>
<comment type="catalytic activity">
    <reaction evidence="1">
        <text>[protein]-peptidylproline (omega=180) = [protein]-peptidylproline (omega=0)</text>
        <dbReference type="Rhea" id="RHEA:16237"/>
        <dbReference type="Rhea" id="RHEA-COMP:10747"/>
        <dbReference type="Rhea" id="RHEA-COMP:10748"/>
        <dbReference type="ChEBI" id="CHEBI:83833"/>
        <dbReference type="ChEBI" id="CHEBI:83834"/>
        <dbReference type="EC" id="5.2.1.8"/>
    </reaction>
</comment>
<comment type="subcellular location">
    <subcellularLocation>
        <location evidence="1">Periplasm</location>
    </subcellularLocation>
    <text evidence="1">Is capable of associating with the outer membrane.</text>
</comment>
<comment type="domain">
    <text evidence="1">The PPIase activity resides only in the second parvulin domain. The N-terminal region and the C-terminal tail are necessary and sufficient for the chaperone activity of SurA. The PPIase activity is dispensable for SurA to function as a chaperone. The N-terminal region and the C-terminal tail are also required for porin recognition.</text>
</comment>
<keyword id="KW-0143">Chaperone</keyword>
<keyword id="KW-0413">Isomerase</keyword>
<keyword id="KW-0574">Periplasm</keyword>
<keyword id="KW-1185">Reference proteome</keyword>
<keyword id="KW-0677">Repeat</keyword>
<keyword id="KW-0697">Rotamase</keyword>
<keyword id="KW-0732">Signal</keyword>
<proteinExistence type="inferred from homology"/>
<name>SURA_BORA1</name>
<dbReference type="EC" id="5.2.1.8" evidence="1"/>
<dbReference type="EMBL" id="AM167904">
    <property type="protein sequence ID" value="CAJ48301.1"/>
    <property type="molecule type" value="Genomic_DNA"/>
</dbReference>
<dbReference type="RefSeq" id="WP_012416391.1">
    <property type="nucleotide sequence ID" value="NC_010645.1"/>
</dbReference>
<dbReference type="SMR" id="Q2KXA6"/>
<dbReference type="STRING" id="360910.BAV0695"/>
<dbReference type="KEGG" id="bav:BAV0695"/>
<dbReference type="eggNOG" id="COG0760">
    <property type="taxonomic scope" value="Bacteria"/>
</dbReference>
<dbReference type="HOGENOM" id="CLU_034646_11_0_4"/>
<dbReference type="OrthoDB" id="14196at2"/>
<dbReference type="Proteomes" id="UP000001977">
    <property type="component" value="Chromosome"/>
</dbReference>
<dbReference type="GO" id="GO:0030288">
    <property type="term" value="C:outer membrane-bounded periplasmic space"/>
    <property type="evidence" value="ECO:0007669"/>
    <property type="project" value="InterPro"/>
</dbReference>
<dbReference type="GO" id="GO:0042277">
    <property type="term" value="F:peptide binding"/>
    <property type="evidence" value="ECO:0007669"/>
    <property type="project" value="InterPro"/>
</dbReference>
<dbReference type="GO" id="GO:0003755">
    <property type="term" value="F:peptidyl-prolyl cis-trans isomerase activity"/>
    <property type="evidence" value="ECO:0007669"/>
    <property type="project" value="UniProtKB-UniRule"/>
</dbReference>
<dbReference type="GO" id="GO:0051082">
    <property type="term" value="F:unfolded protein binding"/>
    <property type="evidence" value="ECO:0007669"/>
    <property type="project" value="UniProtKB-UniRule"/>
</dbReference>
<dbReference type="GO" id="GO:0043165">
    <property type="term" value="P:Gram-negative-bacterium-type cell outer membrane assembly"/>
    <property type="evidence" value="ECO:0007669"/>
    <property type="project" value="InterPro"/>
</dbReference>
<dbReference type="GO" id="GO:0006457">
    <property type="term" value="P:protein folding"/>
    <property type="evidence" value="ECO:0007669"/>
    <property type="project" value="UniProtKB-UniRule"/>
</dbReference>
<dbReference type="GO" id="GO:0050821">
    <property type="term" value="P:protein stabilization"/>
    <property type="evidence" value="ECO:0007669"/>
    <property type="project" value="InterPro"/>
</dbReference>
<dbReference type="Gene3D" id="3.10.50.40">
    <property type="match status" value="2"/>
</dbReference>
<dbReference type="Gene3D" id="1.10.4030.10">
    <property type="entry name" value="Porin chaperone SurA, peptide-binding domain"/>
    <property type="match status" value="1"/>
</dbReference>
<dbReference type="HAMAP" id="MF_01183">
    <property type="entry name" value="Chaperone_SurA"/>
    <property type="match status" value="1"/>
</dbReference>
<dbReference type="InterPro" id="IPR050280">
    <property type="entry name" value="OMP_Chaperone_SurA"/>
</dbReference>
<dbReference type="InterPro" id="IPR046357">
    <property type="entry name" value="PPIase_dom_sf"/>
</dbReference>
<dbReference type="InterPro" id="IPR000297">
    <property type="entry name" value="PPIase_PpiC"/>
</dbReference>
<dbReference type="InterPro" id="IPR023034">
    <property type="entry name" value="PPIase_SurA"/>
</dbReference>
<dbReference type="InterPro" id="IPR015391">
    <property type="entry name" value="SurA_N"/>
</dbReference>
<dbReference type="InterPro" id="IPR027304">
    <property type="entry name" value="Trigger_fact/SurA_dom_sf"/>
</dbReference>
<dbReference type="PANTHER" id="PTHR47637">
    <property type="entry name" value="CHAPERONE SURA"/>
    <property type="match status" value="1"/>
</dbReference>
<dbReference type="PANTHER" id="PTHR47637:SF1">
    <property type="entry name" value="CHAPERONE SURA"/>
    <property type="match status" value="1"/>
</dbReference>
<dbReference type="Pfam" id="PF00639">
    <property type="entry name" value="Rotamase"/>
    <property type="match status" value="1"/>
</dbReference>
<dbReference type="Pfam" id="PF13616">
    <property type="entry name" value="Rotamase_3"/>
    <property type="match status" value="1"/>
</dbReference>
<dbReference type="Pfam" id="PF09312">
    <property type="entry name" value="SurA_N"/>
    <property type="match status" value="1"/>
</dbReference>
<dbReference type="SUPFAM" id="SSF54534">
    <property type="entry name" value="FKBP-like"/>
    <property type="match status" value="2"/>
</dbReference>
<dbReference type="SUPFAM" id="SSF109998">
    <property type="entry name" value="Triger factor/SurA peptide-binding domain-like"/>
    <property type="match status" value="1"/>
</dbReference>
<dbReference type="PROSITE" id="PS50198">
    <property type="entry name" value="PPIC_PPIASE_2"/>
    <property type="match status" value="2"/>
</dbReference>
<evidence type="ECO:0000255" key="1">
    <source>
        <dbReference type="HAMAP-Rule" id="MF_01183"/>
    </source>
</evidence>
<sequence length="506" mass="55402">MMRRLHSSRRFSGSLLALALGLALPLAHAADKPAAGKPAASQPAASKPQGGEQFVDGIAAIVNKDVITMREVQDGVKRAKVDLKERGIQLPDDNVLQKQVLQRLIFDRLERQEADRLGIRVDDAQVTQAINMVASRNKLTPQQLRAEVEKNGLSWDDYRKSLREEIRTDRLRQRTIDNHIIITDAEVDAYLKDQARNPALQPQSAQAPVQEAPAAATGPVMLALGQILVRVPEGASPDTVASLRKKAEDILARLKRGDDFASVAAASSDGPEALEGGVMGVRPIDGWPDLFVKAVSNVPAGQVSGIIQSGNGFHILKVLQRGQAGAPAPARAAAPMPAPAAGRAAQGPVQVTQTHARHILIKTSAVMSDQQARQRLEQVRQRLESGSAKFEDMARQYSQDATAPQGGDLGWVNPGEMVPSFEAAMNSLKPGEISQPVESPFGWHLVQVLERRQKDVTDEMQRMQARQALFERRAGPAFEDWMEQLRAQAYIDNRLEKQERIEQNNR</sequence>
<accession>Q2KXA6</accession>